<comment type="similarity">
    <text evidence="1">Belongs to the UPF0303 family.</text>
</comment>
<keyword id="KW-1185">Reference proteome</keyword>
<evidence type="ECO:0000255" key="1">
    <source>
        <dbReference type="HAMAP-Rule" id="MF_00761"/>
    </source>
</evidence>
<proteinExistence type="inferred from homology"/>
<feature type="chain" id="PRO_1000046743" description="UPF0303 protein BPSL1862">
    <location>
        <begin position="1"/>
        <end position="165"/>
    </location>
</feature>
<sequence>MDIALDLQSIAVQEKTLVFPQFDAARAWALGSQLREFALARGHAVAIDVRTFGQPLFFALVDGATPDNVDWARRKGNVVAHFRRSSYAIGLRLQQAGATLADKHGLPAAEYASHGGAFPIAVAGAGVIGSVTVSGLPQRGDHELVVEALCAQLGHAYATLALTGN</sequence>
<protein>
    <recommendedName>
        <fullName evidence="1">UPF0303 protein BPSL1862</fullName>
    </recommendedName>
</protein>
<organism>
    <name type="scientific">Burkholderia pseudomallei (strain K96243)</name>
    <dbReference type="NCBI Taxonomy" id="272560"/>
    <lineage>
        <taxon>Bacteria</taxon>
        <taxon>Pseudomonadati</taxon>
        <taxon>Pseudomonadota</taxon>
        <taxon>Betaproteobacteria</taxon>
        <taxon>Burkholderiales</taxon>
        <taxon>Burkholderiaceae</taxon>
        <taxon>Burkholderia</taxon>
        <taxon>pseudomallei group</taxon>
    </lineage>
</organism>
<name>Y1862_BURPS</name>
<gene>
    <name type="ordered locus">BPSL1862</name>
</gene>
<accession>Q63TV5</accession>
<reference key="1">
    <citation type="journal article" date="2004" name="Proc. Natl. Acad. Sci. U.S.A.">
        <title>Genomic plasticity of the causative agent of melioidosis, Burkholderia pseudomallei.</title>
        <authorList>
            <person name="Holden M.T.G."/>
            <person name="Titball R.W."/>
            <person name="Peacock S.J."/>
            <person name="Cerdeno-Tarraga A.-M."/>
            <person name="Atkins T."/>
            <person name="Crossman L.C."/>
            <person name="Pitt T."/>
            <person name="Churcher C."/>
            <person name="Mungall K.L."/>
            <person name="Bentley S.D."/>
            <person name="Sebaihia M."/>
            <person name="Thomson N.R."/>
            <person name="Bason N."/>
            <person name="Beacham I.R."/>
            <person name="Brooks K."/>
            <person name="Brown K.A."/>
            <person name="Brown N.F."/>
            <person name="Challis G.L."/>
            <person name="Cherevach I."/>
            <person name="Chillingworth T."/>
            <person name="Cronin A."/>
            <person name="Crossett B."/>
            <person name="Davis P."/>
            <person name="DeShazer D."/>
            <person name="Feltwell T."/>
            <person name="Fraser A."/>
            <person name="Hance Z."/>
            <person name="Hauser H."/>
            <person name="Holroyd S."/>
            <person name="Jagels K."/>
            <person name="Keith K.E."/>
            <person name="Maddison M."/>
            <person name="Moule S."/>
            <person name="Price C."/>
            <person name="Quail M.A."/>
            <person name="Rabbinowitsch E."/>
            <person name="Rutherford K."/>
            <person name="Sanders M."/>
            <person name="Simmonds M."/>
            <person name="Songsivilai S."/>
            <person name="Stevens K."/>
            <person name="Tumapa S."/>
            <person name="Vesaratchavest M."/>
            <person name="Whitehead S."/>
            <person name="Yeats C."/>
            <person name="Barrell B.G."/>
            <person name="Oyston P.C.F."/>
            <person name="Parkhill J."/>
        </authorList>
    </citation>
    <scope>NUCLEOTIDE SEQUENCE [LARGE SCALE GENOMIC DNA]</scope>
    <source>
        <strain>K96243</strain>
    </source>
</reference>
<dbReference type="EMBL" id="BX571965">
    <property type="protein sequence ID" value="CAH35861.1"/>
    <property type="molecule type" value="Genomic_DNA"/>
</dbReference>
<dbReference type="RefSeq" id="WP_004199466.1">
    <property type="nucleotide sequence ID" value="NZ_CP009538.1"/>
</dbReference>
<dbReference type="RefSeq" id="YP_108461.1">
    <property type="nucleotide sequence ID" value="NC_006350.1"/>
</dbReference>
<dbReference type="SMR" id="Q63TV5"/>
<dbReference type="STRING" id="272560.BPSL1862"/>
<dbReference type="KEGG" id="bps:BPSL1862"/>
<dbReference type="PATRIC" id="fig|272560.51.peg.3996"/>
<dbReference type="eggNOG" id="COG4702">
    <property type="taxonomic scope" value="Bacteria"/>
</dbReference>
<dbReference type="Proteomes" id="UP000000605">
    <property type="component" value="Chromosome 1"/>
</dbReference>
<dbReference type="Gene3D" id="3.30.450.150">
    <property type="entry name" value="Haem-degrading domain"/>
    <property type="match status" value="1"/>
</dbReference>
<dbReference type="HAMAP" id="MF_00761">
    <property type="entry name" value="UPF0303"/>
    <property type="match status" value="1"/>
</dbReference>
<dbReference type="InterPro" id="IPR005624">
    <property type="entry name" value="PduO/GlcC-like"/>
</dbReference>
<dbReference type="InterPro" id="IPR038084">
    <property type="entry name" value="PduO/GlcC-like_sf"/>
</dbReference>
<dbReference type="InterPro" id="IPR010371">
    <property type="entry name" value="YBR137W-like"/>
</dbReference>
<dbReference type="NCBIfam" id="NF002695">
    <property type="entry name" value="PRK02487.1-4"/>
    <property type="match status" value="1"/>
</dbReference>
<dbReference type="NCBIfam" id="NF002696">
    <property type="entry name" value="PRK02487.1-5"/>
    <property type="match status" value="1"/>
</dbReference>
<dbReference type="PANTHER" id="PTHR28255">
    <property type="match status" value="1"/>
</dbReference>
<dbReference type="PANTHER" id="PTHR28255:SF1">
    <property type="entry name" value="UPF0303 PROTEIN YBR137W"/>
    <property type="match status" value="1"/>
</dbReference>
<dbReference type="Pfam" id="PF03928">
    <property type="entry name" value="HbpS-like"/>
    <property type="match status" value="1"/>
</dbReference>
<dbReference type="PIRSF" id="PIRSF008757">
    <property type="entry name" value="UCP008757"/>
    <property type="match status" value="1"/>
</dbReference>
<dbReference type="SUPFAM" id="SSF143744">
    <property type="entry name" value="GlcG-like"/>
    <property type="match status" value="1"/>
</dbReference>